<sequence length="1264" mass="140476">MSTLYVSPHPDAFPSLRALIAARYGEAGEGPGWGGAHPRICLQPPPTSRTPFPPPRLPALEQGPGGLWVWGATAVAQLLWPAGLGGPGGSRAAVLVQQWVSYADTELIPAACGATLPALGLRSSAQDPQAVLGALGRALSPLEEWLRLHTYLAGEAPTLADLAAVTALLLPFRYVLDPPARRIWNNVTRWFVTCVRQPEFRAVLGEVVLYSGARPLSHQPGPEAPALPKTAAQLKKEAKKREKLEKFQQKQKIQQQQPPPGEKKPKPEKREKRDPGVITYDLPTPPGEKKDVSGPMPDSYSPRYVEAAWYPWWEQQGFFKPEYGRPNVSAANPRGVFMMCIPPPNVTGSLHLGHALTNAIQDSLTRWHRMRGETTLWNPGCDHAGIATQVVVEKKLWREQGLSRHQLGREAFLQEVWKWKEEKGDRIYHQLKKLGSSLDWDRACFTMDPKLSAAVTEAFVRLHEEGIIYRSTRLVNWSCTLNSAISDIEVDKKELTGRTLLSVPGYKEKVEFGVLVSFAYKVQGSDSDEEVVVATTRIETMLGDVAVAVHPKDTRYQHLKGKNVIHPFLSRSLPIVFDEFVDMDFGTGAVKITPAHDQNDYEVGQRHGLEAISIMDSRGALINVPPPFLGLPRFEARKAVLVALKERGLFRGIEDNPMVVPLCNRSKDVVEPLLRPQWYVRCGEMAQAASAAVTRGDLRILPEAHQRTWHAWMDNIREWCISRQLWWGHRIPAYFVTVSDPAVPPGEDPDGRYWVSGRNEAEAREKAAKEFGVSPDKISLQQDEDVLDTWFSSGLFPLSILGWPNQSEDLSVFYPGTLLETGHDILFFWVARMVMLGLKLTGRLPFREVYLHAIVRDAHGRKMSKSLGNVIDPLDVIYGISLQGLHNQLLNSNLDPSEVEKAKEGQKADFPAGIPECGTDALRFGLCAYMSQGRDINLDVNRILGYRHFCNKLWNATKFALRGLGKGFVPSPTSQPGGHESLVDRWIRSRLTEAVRLSNQGFQAYDFPAVTTAQYSFWLYELCDVYLECLKPVLNGVDQVAAECARQTLYTCLDVGLRLLSPFMPFVTEELFQRLPRRMPQAPPSLCVTPYPEPSECSWKDPEAEAALELALSITRAVRSLRADYNLTRIRPDCFLEVADEATGALASAVSGYVQALASAGVVAVLALGAPAPQGCAVALASDRCSIHLQLQGLVDPARELGKLQAKRVEAQRQAQRLRERRAASGYPVKVPLEVQEADEAKLQQTEAELRKVDEAIALFQKML</sequence>
<accession>P26640</accession>
<accession>B0V1N1</accession>
<accession>B4DZ61</accession>
<accession>Q5JQ90</accession>
<accession>Q96E77</accession>
<accession>Q9UQM2</accession>
<dbReference type="EC" id="6.1.1.9" evidence="4"/>
<dbReference type="EMBL" id="X59303">
    <property type="protein sequence ID" value="CAA41990.1"/>
    <property type="status" value="ALT_FRAME"/>
    <property type="molecule type" value="mRNA"/>
</dbReference>
<dbReference type="EMBL" id="AF134726">
    <property type="protein sequence ID" value="AAD21819.1"/>
    <property type="molecule type" value="Genomic_DNA"/>
</dbReference>
<dbReference type="EMBL" id="BA000025">
    <property type="protein sequence ID" value="BAB63303.1"/>
    <property type="molecule type" value="Genomic_DNA"/>
</dbReference>
<dbReference type="EMBL" id="AK302762">
    <property type="protein sequence ID" value="BAG63973.1"/>
    <property type="molecule type" value="mRNA"/>
</dbReference>
<dbReference type="EMBL" id="AL662834">
    <property type="status" value="NOT_ANNOTATED_CDS"/>
    <property type="molecule type" value="Genomic_DNA"/>
</dbReference>
<dbReference type="EMBL" id="AL662899">
    <property type="status" value="NOT_ANNOTATED_CDS"/>
    <property type="molecule type" value="Genomic_DNA"/>
</dbReference>
<dbReference type="EMBL" id="AL671762">
    <property type="status" value="NOT_ANNOTATED_CDS"/>
    <property type="molecule type" value="Genomic_DNA"/>
</dbReference>
<dbReference type="EMBL" id="CR925765">
    <property type="status" value="NOT_ANNOTATED_CDS"/>
    <property type="molecule type" value="Genomic_DNA"/>
</dbReference>
<dbReference type="EMBL" id="CH471081">
    <property type="protein sequence ID" value="EAX03523.1"/>
    <property type="molecule type" value="Genomic_DNA"/>
</dbReference>
<dbReference type="EMBL" id="BC012808">
    <property type="protein sequence ID" value="AAH12808.1"/>
    <property type="molecule type" value="mRNA"/>
</dbReference>
<dbReference type="EMBL" id="M98326">
    <property type="protein sequence ID" value="AAA81332.1"/>
    <property type="molecule type" value="mRNA"/>
</dbReference>
<dbReference type="CCDS" id="CCDS34412.1">
    <molecule id="P26640-1"/>
</dbReference>
<dbReference type="PIR" id="S17675">
    <property type="entry name" value="S17675"/>
</dbReference>
<dbReference type="RefSeq" id="NP_006286.1">
    <molecule id="P26640-1"/>
    <property type="nucleotide sequence ID" value="NM_006295.3"/>
</dbReference>
<dbReference type="RefSeq" id="XP_047275253.1">
    <molecule id="P26640-1"/>
    <property type="nucleotide sequence ID" value="XM_047419297.1"/>
</dbReference>
<dbReference type="SMR" id="P26640"/>
<dbReference type="BioGRID" id="113250">
    <property type="interactions" value="270"/>
</dbReference>
<dbReference type="FunCoup" id="P26640">
    <property type="interactions" value="1933"/>
</dbReference>
<dbReference type="IntAct" id="P26640">
    <property type="interactions" value="92"/>
</dbReference>
<dbReference type="MINT" id="P26640"/>
<dbReference type="STRING" id="9606.ENSP00000364815"/>
<dbReference type="BindingDB" id="P26640"/>
<dbReference type="ChEMBL" id="CHEMBL2612"/>
<dbReference type="DrugBank" id="DB00161">
    <property type="generic name" value="Valine"/>
</dbReference>
<dbReference type="GlyGen" id="P26640">
    <property type="glycosylation" value="5 sites, 1 O-linked glycan (3 sites)"/>
</dbReference>
<dbReference type="iPTMnet" id="P26640"/>
<dbReference type="MetOSite" id="P26640"/>
<dbReference type="PhosphoSitePlus" id="P26640"/>
<dbReference type="SwissPalm" id="P26640"/>
<dbReference type="BioMuta" id="VARS"/>
<dbReference type="DMDM" id="12644177"/>
<dbReference type="CPTAC" id="CPTAC-1642"/>
<dbReference type="jPOST" id="P26640"/>
<dbReference type="MassIVE" id="P26640"/>
<dbReference type="PaxDb" id="9606-ENSP00000364815"/>
<dbReference type="PeptideAtlas" id="P26640"/>
<dbReference type="ProteomicsDB" id="54358">
    <molecule id="P26640-1"/>
</dbReference>
<dbReference type="ProteomicsDB" id="5573"/>
<dbReference type="Pumba" id="P26640"/>
<dbReference type="Antibodypedia" id="51277">
    <property type="antibodies" value="182 antibodies from 28 providers"/>
</dbReference>
<dbReference type="DNASU" id="7407"/>
<dbReference type="Ensembl" id="ENST00000211402.10">
    <molecule id="P26640-1"/>
    <property type="protein sequence ID" value="ENSP00000211402.6"/>
    <property type="gene ID" value="ENSG00000096171.14"/>
</dbReference>
<dbReference type="Ensembl" id="ENST00000375663.8">
    <molecule id="P26640-1"/>
    <property type="protein sequence ID" value="ENSP00000364815.3"/>
    <property type="gene ID" value="ENSG00000204394.13"/>
</dbReference>
<dbReference type="Ensembl" id="ENST00000422694.6">
    <property type="protein sequence ID" value="ENSP00000401121.2"/>
    <property type="gene ID" value="ENSG00000224264.9"/>
</dbReference>
<dbReference type="Ensembl" id="ENST00000435657.6">
    <property type="protein sequence ID" value="ENSP00000415316.2"/>
    <property type="gene ID" value="ENSG00000231116.9"/>
</dbReference>
<dbReference type="Ensembl" id="ENST00000457796.6">
    <molecule id="P26640-1"/>
    <property type="protein sequence ID" value="ENSP00000403359.2"/>
    <property type="gene ID" value="ENSG00000226589.9"/>
</dbReference>
<dbReference type="GeneID" id="7407"/>
<dbReference type="KEGG" id="hsa:7407"/>
<dbReference type="MANE-Select" id="ENST00000375663.8">
    <property type="protein sequence ID" value="ENSP00000364815.3"/>
    <property type="RefSeq nucleotide sequence ID" value="NM_006295.3"/>
    <property type="RefSeq protein sequence ID" value="NP_006286.1"/>
</dbReference>
<dbReference type="UCSC" id="uc003nxe.4">
    <molecule id="P26640-1"/>
    <property type="organism name" value="human"/>
</dbReference>
<dbReference type="AGR" id="HGNC:12651"/>
<dbReference type="CTD" id="7407"/>
<dbReference type="DisGeNET" id="7407"/>
<dbReference type="GeneCards" id="VARS1"/>
<dbReference type="HGNC" id="HGNC:12651">
    <property type="gene designation" value="VARS1"/>
</dbReference>
<dbReference type="HPA" id="ENSG00000204394">
    <property type="expression patterns" value="Low tissue specificity"/>
</dbReference>
<dbReference type="MalaCards" id="VARS1"/>
<dbReference type="MIM" id="192150">
    <property type="type" value="gene"/>
</dbReference>
<dbReference type="MIM" id="617802">
    <property type="type" value="phenotype"/>
</dbReference>
<dbReference type="neXtProt" id="NX_P26640"/>
<dbReference type="OpenTargets" id="ENSG00000204394"/>
<dbReference type="PharmGKB" id="PA37275"/>
<dbReference type="VEuPathDB" id="HostDB:ENSG00000204394"/>
<dbReference type="eggNOG" id="KOG0432">
    <property type="taxonomic scope" value="Eukaryota"/>
</dbReference>
<dbReference type="eggNOG" id="KOG0867">
    <property type="taxonomic scope" value="Eukaryota"/>
</dbReference>
<dbReference type="GeneTree" id="ENSGT00940000157775"/>
<dbReference type="HOGENOM" id="CLU_001493_0_1_1"/>
<dbReference type="InParanoid" id="P26640"/>
<dbReference type="OMA" id="LDTWMDS"/>
<dbReference type="OrthoDB" id="629407at2759"/>
<dbReference type="PAN-GO" id="P26640">
    <property type="GO annotations" value="3 GO annotations based on evolutionary models"/>
</dbReference>
<dbReference type="PhylomeDB" id="P26640"/>
<dbReference type="TreeFam" id="TF300648"/>
<dbReference type="BRENDA" id="6.1.1.9">
    <property type="organism ID" value="2681"/>
</dbReference>
<dbReference type="PathwayCommons" id="P26640"/>
<dbReference type="Reactome" id="R-HSA-379716">
    <property type="pathway name" value="Cytosolic tRNA aminoacylation"/>
</dbReference>
<dbReference type="SignaLink" id="P26640"/>
<dbReference type="SIGNOR" id="P26640"/>
<dbReference type="BioGRID-ORCS" id="7407">
    <property type="hits" value="829 hits in 1128 CRISPR screens"/>
</dbReference>
<dbReference type="CD-CODE" id="91857CE7">
    <property type="entry name" value="Nucleolus"/>
</dbReference>
<dbReference type="ChiTaRS" id="VARS">
    <property type="organism name" value="human"/>
</dbReference>
<dbReference type="GeneWiki" id="VARS"/>
<dbReference type="GenomeRNAi" id="7407"/>
<dbReference type="Pharos" id="P26640">
    <property type="development level" value="Tchem"/>
</dbReference>
<dbReference type="PRO" id="PR:P26640"/>
<dbReference type="Proteomes" id="UP000005640">
    <property type="component" value="Chromosome 6"/>
</dbReference>
<dbReference type="RNAct" id="P26640">
    <property type="molecule type" value="protein"/>
</dbReference>
<dbReference type="Bgee" id="ENSG00000096171">
    <property type="expression patterns" value="Expressed in medulla oblongata and 11 other cell types or tissues"/>
</dbReference>
<dbReference type="ExpressionAtlas" id="P26640">
    <property type="expression patterns" value="baseline and differential"/>
</dbReference>
<dbReference type="GO" id="GO:0005829">
    <property type="term" value="C:cytosol"/>
    <property type="evidence" value="ECO:0000314"/>
    <property type="project" value="HPA"/>
</dbReference>
<dbReference type="GO" id="GO:0005783">
    <property type="term" value="C:endoplasmic reticulum"/>
    <property type="evidence" value="ECO:0000314"/>
    <property type="project" value="HPA"/>
</dbReference>
<dbReference type="GO" id="GO:0002161">
    <property type="term" value="F:aminoacyl-tRNA deacylase activity"/>
    <property type="evidence" value="ECO:0007669"/>
    <property type="project" value="InterPro"/>
</dbReference>
<dbReference type="GO" id="GO:0005524">
    <property type="term" value="F:ATP binding"/>
    <property type="evidence" value="ECO:0007669"/>
    <property type="project" value="UniProtKB-KW"/>
</dbReference>
<dbReference type="GO" id="GO:0004832">
    <property type="term" value="F:valine-tRNA ligase activity"/>
    <property type="evidence" value="ECO:0000314"/>
    <property type="project" value="UniProtKB"/>
</dbReference>
<dbReference type="GO" id="GO:0006418">
    <property type="term" value="P:tRNA aminoacylation for protein translation"/>
    <property type="evidence" value="ECO:0000304"/>
    <property type="project" value="Reactome"/>
</dbReference>
<dbReference type="GO" id="GO:0006438">
    <property type="term" value="P:valyl-tRNA aminoacylation"/>
    <property type="evidence" value="ECO:0000318"/>
    <property type="project" value="GO_Central"/>
</dbReference>
<dbReference type="CDD" id="cd07962">
    <property type="entry name" value="Anticodon_Ia_Val"/>
    <property type="match status" value="1"/>
</dbReference>
<dbReference type="CDD" id="cd10294">
    <property type="entry name" value="GST_C_ValRS_N"/>
    <property type="match status" value="1"/>
</dbReference>
<dbReference type="CDD" id="cd00817">
    <property type="entry name" value="ValRS_core"/>
    <property type="match status" value="1"/>
</dbReference>
<dbReference type="FunFam" id="1.20.1050.10:FF:000006">
    <property type="entry name" value="Elongation factor 1 gamma"/>
    <property type="match status" value="1"/>
</dbReference>
<dbReference type="FunFam" id="3.40.50.620:FF:000119">
    <property type="entry name" value="Putative valine--tRNA ligase-like"/>
    <property type="match status" value="1"/>
</dbReference>
<dbReference type="FunFam" id="1.10.287.380:FF:000002">
    <property type="entry name" value="Valine--tRNA ligase"/>
    <property type="match status" value="1"/>
</dbReference>
<dbReference type="FunFam" id="1.10.730.10:FF:000015">
    <property type="entry name" value="Valine--tRNA ligase"/>
    <property type="match status" value="1"/>
</dbReference>
<dbReference type="FunFam" id="3.90.740.10:FF:000030">
    <property type="entry name" value="valine--tRNA ligase"/>
    <property type="match status" value="1"/>
</dbReference>
<dbReference type="FunFam" id="3.90.740.10:FF:000008">
    <property type="entry name" value="Valine--tRNA ligase, mitochondrial"/>
    <property type="match status" value="1"/>
</dbReference>
<dbReference type="FunFam" id="3.40.50.620:FF:000066">
    <property type="entry name" value="valine--tRNA ligase, mitochondrial"/>
    <property type="match status" value="1"/>
</dbReference>
<dbReference type="Gene3D" id="1.20.1050.10">
    <property type="match status" value="1"/>
</dbReference>
<dbReference type="Gene3D" id="3.40.50.620">
    <property type="entry name" value="HUPs"/>
    <property type="match status" value="2"/>
</dbReference>
<dbReference type="Gene3D" id="1.10.730.10">
    <property type="entry name" value="Isoleucyl-tRNA Synthetase, Domain 1"/>
    <property type="match status" value="1"/>
</dbReference>
<dbReference type="Gene3D" id="1.10.287.380">
    <property type="entry name" value="Valyl-tRNA synthetase, C-terminal domain"/>
    <property type="match status" value="1"/>
</dbReference>
<dbReference type="Gene3D" id="3.90.740.10">
    <property type="entry name" value="Valyl/Leucyl/Isoleucyl-tRNA synthetase, editing domain"/>
    <property type="match status" value="1"/>
</dbReference>
<dbReference type="HAMAP" id="MF_02004">
    <property type="entry name" value="Val_tRNA_synth_type1"/>
    <property type="match status" value="1"/>
</dbReference>
<dbReference type="InterPro" id="IPR001412">
    <property type="entry name" value="aa-tRNA-synth_I_CS"/>
</dbReference>
<dbReference type="InterPro" id="IPR002300">
    <property type="entry name" value="aa-tRNA-synth_Ia"/>
</dbReference>
<dbReference type="InterPro" id="IPR033705">
    <property type="entry name" value="Anticodon_Ia_Val"/>
</dbReference>
<dbReference type="InterPro" id="IPR010987">
    <property type="entry name" value="Glutathione-S-Trfase_C-like"/>
</dbReference>
<dbReference type="InterPro" id="IPR036282">
    <property type="entry name" value="Glutathione-S-Trfase_C_sf"/>
</dbReference>
<dbReference type="InterPro" id="IPR004046">
    <property type="entry name" value="GST_C"/>
</dbReference>
<dbReference type="InterPro" id="IPR013155">
    <property type="entry name" value="M/V/L/I-tRNA-synth_anticd-bd"/>
</dbReference>
<dbReference type="InterPro" id="IPR014729">
    <property type="entry name" value="Rossmann-like_a/b/a_fold"/>
</dbReference>
<dbReference type="InterPro" id="IPR009080">
    <property type="entry name" value="tRNAsynth_Ia_anticodon-bd"/>
</dbReference>
<dbReference type="InterPro" id="IPR037118">
    <property type="entry name" value="Val-tRNA_synth_C_sf"/>
</dbReference>
<dbReference type="InterPro" id="IPR009008">
    <property type="entry name" value="Val/Leu/Ile-tRNA-synth_edit"/>
</dbReference>
<dbReference type="InterPro" id="IPR002303">
    <property type="entry name" value="Valyl-tRNA_ligase"/>
</dbReference>
<dbReference type="NCBIfam" id="NF004349">
    <property type="entry name" value="PRK05729.1"/>
    <property type="match status" value="1"/>
</dbReference>
<dbReference type="NCBIfam" id="TIGR00422">
    <property type="entry name" value="valS"/>
    <property type="match status" value="1"/>
</dbReference>
<dbReference type="PANTHER" id="PTHR11946:SF109">
    <property type="entry name" value="VALINE--TRNA LIGASE"/>
    <property type="match status" value="1"/>
</dbReference>
<dbReference type="PANTHER" id="PTHR11946">
    <property type="entry name" value="VALYL-TRNA SYNTHETASES"/>
    <property type="match status" value="1"/>
</dbReference>
<dbReference type="Pfam" id="PF08264">
    <property type="entry name" value="Anticodon_1"/>
    <property type="match status" value="1"/>
</dbReference>
<dbReference type="Pfam" id="PF00043">
    <property type="entry name" value="GST_C"/>
    <property type="match status" value="1"/>
</dbReference>
<dbReference type="Pfam" id="PF00133">
    <property type="entry name" value="tRNA-synt_1"/>
    <property type="match status" value="1"/>
</dbReference>
<dbReference type="PRINTS" id="PR00986">
    <property type="entry name" value="TRNASYNTHVAL"/>
</dbReference>
<dbReference type="SUPFAM" id="SSF47323">
    <property type="entry name" value="Anticodon-binding domain of a subclass of class I aminoacyl-tRNA synthetases"/>
    <property type="match status" value="1"/>
</dbReference>
<dbReference type="SUPFAM" id="SSF47616">
    <property type="entry name" value="GST C-terminal domain-like"/>
    <property type="match status" value="1"/>
</dbReference>
<dbReference type="SUPFAM" id="SSF52374">
    <property type="entry name" value="Nucleotidylyl transferase"/>
    <property type="match status" value="1"/>
</dbReference>
<dbReference type="SUPFAM" id="SSF50677">
    <property type="entry name" value="ValRS/IleRS/LeuRS editing domain"/>
    <property type="match status" value="1"/>
</dbReference>
<dbReference type="PROSITE" id="PS00178">
    <property type="entry name" value="AA_TRNA_LIGASE_I"/>
    <property type="match status" value="1"/>
</dbReference>
<dbReference type="PROSITE" id="PS50405">
    <property type="entry name" value="GST_CTER"/>
    <property type="match status" value="1"/>
</dbReference>
<protein>
    <recommendedName>
        <fullName evidence="7">Valine--tRNA ligase</fullName>
        <ecNumber evidence="4">6.1.1.9</ecNumber>
    </recommendedName>
    <alternativeName>
        <fullName>Protein G7a</fullName>
    </alternativeName>
    <alternativeName>
        <fullName>Valyl-tRNA synthetase</fullName>
        <shortName>ValRS</shortName>
    </alternativeName>
</protein>
<name>SYVC_HUMAN</name>
<comment type="function">
    <text evidence="4">Catalyzes the attachment of valine to tRNA(Val).</text>
</comment>
<comment type="catalytic activity">
    <reaction evidence="4">
        <text>tRNA(Val) + L-valine + ATP = L-valyl-tRNA(Val) + AMP + diphosphate</text>
        <dbReference type="Rhea" id="RHEA:10704"/>
        <dbReference type="Rhea" id="RHEA-COMP:9672"/>
        <dbReference type="Rhea" id="RHEA-COMP:9708"/>
        <dbReference type="ChEBI" id="CHEBI:30616"/>
        <dbReference type="ChEBI" id="CHEBI:33019"/>
        <dbReference type="ChEBI" id="CHEBI:57762"/>
        <dbReference type="ChEBI" id="CHEBI:78442"/>
        <dbReference type="ChEBI" id="CHEBI:78537"/>
        <dbReference type="ChEBI" id="CHEBI:456215"/>
        <dbReference type="EC" id="6.1.1.9"/>
    </reaction>
    <physiologicalReaction direction="left-to-right" evidence="8">
        <dbReference type="Rhea" id="RHEA:10705"/>
    </physiologicalReaction>
</comment>
<comment type="activity regulation">
    <text>Can be regulated by protein kinase C-dependent phosphorylation.</text>
</comment>
<comment type="subunit">
    <text>Forms high-molecular-mass aggregates with elongation factor 1.</text>
</comment>
<comment type="interaction">
    <interactant intactId="EBI-355765">
        <id>P26640</id>
    </interactant>
    <interactant intactId="EBI-739580">
        <id>Q13137</id>
        <label>CALCOCO2</label>
    </interactant>
    <organismsDiffer>false</organismsDiffer>
    <experiments>3</experiments>
</comment>
<comment type="interaction">
    <interactant intactId="EBI-355765">
        <id>P26640</id>
    </interactant>
    <interactant intactId="EBI-1383687">
        <id>Q9UQM7</id>
        <label>CAMK2A</label>
    </interactant>
    <organismsDiffer>false</organismsDiffer>
    <experiments>3</experiments>
</comment>
<comment type="interaction">
    <interactant intactId="EBI-355765">
        <id>P26640</id>
    </interactant>
    <interactant intactId="EBI-11523526">
        <id>Q13554-3</id>
        <label>CAMK2B</label>
    </interactant>
    <organismsDiffer>false</organismsDiffer>
    <experiments>3</experiments>
</comment>
<comment type="alternative products">
    <event type="alternative splicing"/>
    <isoform>
        <id>P26640-1</id>
        <name>1</name>
        <sequence type="displayed"/>
    </isoform>
    <isoform>
        <id>P26640-2</id>
        <name>2</name>
        <sequence type="described" ref="VSP_056480 VSP_056481 VSP_056482"/>
    </isoform>
</comment>
<comment type="disease" evidence="3">
    <disease id="DI-05161">
        <name>Neurodevelopmental disorder with microcephaly, seizures, and cortical atrophy</name>
        <acronym>NDMSCA</acronym>
        <description>An autosomal recessive neurodevelopmental disorder characterized by severe developmental delay, intellectual disability, severe microcephaly, and cortical atrophy.</description>
        <dbReference type="MIM" id="617802"/>
    </disease>
    <text>The disease may be caused by variants affecting the gene represented in this entry.</text>
</comment>
<comment type="similarity">
    <text evidence="7">Belongs to the class-I aminoacyl-tRNA synthetase family.</text>
</comment>
<comment type="sequence caution" evidence="7">
    <conflict type="frameshift">
        <sequence resource="EMBL-CDS" id="CAA41990"/>
    </conflict>
</comment>
<organism>
    <name type="scientific">Homo sapiens</name>
    <name type="common">Human</name>
    <dbReference type="NCBI Taxonomy" id="9606"/>
    <lineage>
        <taxon>Eukaryota</taxon>
        <taxon>Metazoa</taxon>
        <taxon>Chordata</taxon>
        <taxon>Craniata</taxon>
        <taxon>Vertebrata</taxon>
        <taxon>Euteleostomi</taxon>
        <taxon>Mammalia</taxon>
        <taxon>Eutheria</taxon>
        <taxon>Euarchontoglires</taxon>
        <taxon>Primates</taxon>
        <taxon>Haplorrhini</taxon>
        <taxon>Catarrhini</taxon>
        <taxon>Hominidae</taxon>
        <taxon>Homo</taxon>
    </lineage>
</organism>
<gene>
    <name evidence="9" type="primary">VARS1</name>
    <name type="synonym">G7A</name>
    <name type="synonym">VARS</name>
    <name type="synonym">VARS2</name>
</gene>
<proteinExistence type="evidence at protein level"/>
<feature type="initiator methionine" description="Removed" evidence="5 11 12">
    <location>
        <position position="1"/>
    </location>
</feature>
<feature type="chain" id="PRO_0000106253" description="Valine--tRNA ligase">
    <location>
        <begin position="2"/>
        <end position="1264"/>
    </location>
</feature>
<feature type="domain" description="GST C-terminal">
    <location>
        <begin position="89"/>
        <end position="219"/>
    </location>
</feature>
<feature type="region of interest" description="Disordered" evidence="2">
    <location>
        <begin position="217"/>
        <end position="296"/>
    </location>
</feature>
<feature type="short sequence motif" description="'HIGH' region">
    <location>
        <begin position="344"/>
        <end position="354"/>
    </location>
</feature>
<feature type="short sequence motif" description="'KMSKS' region">
    <location>
        <begin position="862"/>
        <end position="866"/>
    </location>
</feature>
<feature type="compositionally biased region" description="Basic and acidic residues" evidence="2">
    <location>
        <begin position="234"/>
        <end position="248"/>
    </location>
</feature>
<feature type="compositionally biased region" description="Basic and acidic residues" evidence="2">
    <location>
        <begin position="261"/>
        <end position="275"/>
    </location>
</feature>
<feature type="binding site" evidence="1">
    <location>
        <position position="865"/>
    </location>
    <ligand>
        <name>ATP</name>
        <dbReference type="ChEBI" id="CHEBI:30616"/>
    </ligand>
</feature>
<feature type="modified residue" description="N-acetylserine" evidence="5 11 12">
    <location>
        <position position="2"/>
    </location>
</feature>
<feature type="modified residue" description="Phosphoserine" evidence="13">
    <location>
        <position position="437"/>
    </location>
</feature>
<feature type="modified residue" description="Phosphoserine" evidence="13">
    <location>
        <position position="527"/>
    </location>
</feature>
<feature type="modified residue" description="N6-acetyllysine" evidence="10">
    <location>
        <position position="645"/>
    </location>
</feature>
<feature type="splice variant" id="VSP_056480" description="In isoform 2." evidence="6">
    <location>
        <begin position="1"/>
        <end position="295"/>
    </location>
</feature>
<feature type="splice variant" id="VSP_056481" description="In isoform 2." evidence="6">
    <original>AVKI</original>
    <variation>PAQV</variation>
    <location>
        <begin position="589"/>
        <end position="592"/>
    </location>
</feature>
<feature type="splice variant" id="VSP_056482" description="In isoform 2." evidence="6">
    <location>
        <begin position="593"/>
        <end position="1264"/>
    </location>
</feature>
<feature type="sequence variant" id="VAR_052647" description="In dbSNP:rs2607015.">
    <original>P</original>
    <variation>R</variation>
    <location>
        <position position="51"/>
    </location>
</feature>
<feature type="sequence variant" id="VAR_061909" description="In dbSNP:rs2753960.">
    <original>P</original>
    <variation>T</variation>
    <location>
        <position position="51"/>
    </location>
</feature>
<feature type="sequence variant" id="VAR_052648" description="In dbSNP:rs35196751.">
    <original>R</original>
    <variation>C</variation>
    <location>
        <position position="181"/>
    </location>
</feature>
<feature type="sequence variant" id="VAR_052649" description="In dbSNP:rs11531.">
    <original>P</original>
    <variation>S</variation>
    <location>
        <position position="626"/>
    </location>
</feature>
<feature type="sequence variant" id="VAR_080602" description="In NDMSCA; uncertain significance; dbSNP:rs1060499734." evidence="3">
    <original>L</original>
    <variation>F</variation>
    <location>
        <position position="885"/>
    </location>
</feature>
<feature type="sequence variant" id="VAR_052650" description="In dbSNP:rs1076827.">
    <original>P</original>
    <variation>L</variation>
    <location>
        <position position="1008"/>
    </location>
</feature>
<feature type="sequence variant" id="VAR_080603" description="In NDMSCA; uncertain significance; dbSNP:rs769369302." evidence="3">
    <original>R</original>
    <variation>Q</variation>
    <location>
        <position position="1058"/>
    </location>
</feature>
<feature type="sequence conflict" description="In Ref. 1; CAA41990 and 7; AAH12808." evidence="7" ref="1 7">
    <original>P</original>
    <variation>S</variation>
    <location>
        <position position="51"/>
    </location>
</feature>
<feature type="sequence conflict" description="In Ref. 10; AAA81332." evidence="7" ref="10">
    <original>A</original>
    <variation>G</variation>
    <location>
        <position position="331"/>
    </location>
</feature>
<feature type="sequence conflict" description="In Ref. 1; CAA41990." evidence="7" ref="1">
    <original>V</original>
    <variation>G</variation>
    <location>
        <position position="590"/>
    </location>
</feature>
<feature type="sequence conflict" description="In Ref. 1; CAA41990." evidence="7" ref="1">
    <original>S</original>
    <variation>F</variation>
    <location>
        <position position="792"/>
    </location>
</feature>
<feature type="sequence conflict" description="In Ref. 10; AAA81332." evidence="7" ref="10">
    <original>M</original>
    <variation>I</variation>
    <location>
        <position position="1064"/>
    </location>
</feature>
<feature type="sequence conflict" description="In Ref. 10; AAA81332." evidence="7" ref="10">
    <location>
        <position position="1169"/>
    </location>
</feature>
<evidence type="ECO:0000250" key="1"/>
<evidence type="ECO:0000256" key="2">
    <source>
        <dbReference type="SAM" id="MobiDB-lite"/>
    </source>
</evidence>
<evidence type="ECO:0000269" key="3">
    <source>
    </source>
</evidence>
<evidence type="ECO:0000269" key="4">
    <source>
    </source>
</evidence>
<evidence type="ECO:0000269" key="5">
    <source ref="9"/>
</evidence>
<evidence type="ECO:0000303" key="6">
    <source>
    </source>
</evidence>
<evidence type="ECO:0000305" key="7"/>
<evidence type="ECO:0000305" key="8">
    <source>
    </source>
</evidence>
<evidence type="ECO:0000312" key="9">
    <source>
        <dbReference type="HGNC" id="HGNC:12651"/>
    </source>
</evidence>
<evidence type="ECO:0007744" key="10">
    <source>
    </source>
</evidence>
<evidence type="ECO:0007744" key="11">
    <source>
    </source>
</evidence>
<evidence type="ECO:0007744" key="12">
    <source>
    </source>
</evidence>
<evidence type="ECO:0007744" key="13">
    <source>
    </source>
</evidence>
<keyword id="KW-0007">Acetylation</keyword>
<keyword id="KW-0025">Alternative splicing</keyword>
<keyword id="KW-0030">Aminoacyl-tRNA synthetase</keyword>
<keyword id="KW-0067">ATP-binding</keyword>
<keyword id="KW-0903">Direct protein sequencing</keyword>
<keyword id="KW-0225">Disease variant</keyword>
<keyword id="KW-0887">Epilepsy</keyword>
<keyword id="KW-0991">Intellectual disability</keyword>
<keyword id="KW-0436">Ligase</keyword>
<keyword id="KW-0547">Nucleotide-binding</keyword>
<keyword id="KW-0597">Phosphoprotein</keyword>
<keyword id="KW-0648">Protein biosynthesis</keyword>
<keyword id="KW-1267">Proteomics identification</keyword>
<keyword id="KW-1185">Reference proteome</keyword>
<reference key="1">
    <citation type="journal article" date="1991" name="Biochem. J.">
        <title>Evidence that gene G7a in the human major histocompatibility complex encodes valyl-tRNA synthetase.</title>
        <authorList>
            <person name="Hsieh H.-L."/>
            <person name="Campbell R.D."/>
        </authorList>
    </citation>
    <scope>NUCLEOTIDE SEQUENCE [MRNA] (ISOFORM 1)</scope>
</reference>
<reference key="2">
    <citation type="journal article" date="1992" name="Biochem. J.">
        <authorList>
            <person name="Hsieh S.-L."/>
            <person name="Campbell R.D."/>
        </authorList>
    </citation>
    <scope>ERRATUM OF PUBMED:1898367</scope>
</reference>
<reference key="3">
    <citation type="journal article" date="2003" name="Genome Res.">
        <title>Analysis of the gene-dense major histocompatibility complex class III region and its comparison to mouse.</title>
        <authorList>
            <person name="Xie T."/>
            <person name="Rowen L."/>
            <person name="Aguado B."/>
            <person name="Ahearn M.E."/>
            <person name="Madan A."/>
            <person name="Qin S."/>
            <person name="Campbell R.D."/>
            <person name="Hood L."/>
        </authorList>
    </citation>
    <scope>NUCLEOTIDE SEQUENCE [LARGE SCALE GENOMIC DNA]</scope>
</reference>
<reference key="4">
    <citation type="submission" date="1999-09" db="EMBL/GenBank/DDBJ databases">
        <title>Homo sapiens 2,229,817bp genomic DNA of 6p21.3 HLA class I region.</title>
        <authorList>
            <person name="Shiina S."/>
            <person name="Tamiya G."/>
            <person name="Oka A."/>
            <person name="Inoko H."/>
        </authorList>
    </citation>
    <scope>NUCLEOTIDE SEQUENCE [LARGE SCALE GENOMIC DNA]</scope>
</reference>
<reference key="5">
    <citation type="journal article" date="2004" name="Nat. Genet.">
        <title>Complete sequencing and characterization of 21,243 full-length human cDNAs.</title>
        <authorList>
            <person name="Ota T."/>
            <person name="Suzuki Y."/>
            <person name="Nishikawa T."/>
            <person name="Otsuki T."/>
            <person name="Sugiyama T."/>
            <person name="Irie R."/>
            <person name="Wakamatsu A."/>
            <person name="Hayashi K."/>
            <person name="Sato H."/>
            <person name="Nagai K."/>
            <person name="Kimura K."/>
            <person name="Makita H."/>
            <person name="Sekine M."/>
            <person name="Obayashi M."/>
            <person name="Nishi T."/>
            <person name="Shibahara T."/>
            <person name="Tanaka T."/>
            <person name="Ishii S."/>
            <person name="Yamamoto J."/>
            <person name="Saito K."/>
            <person name="Kawai Y."/>
            <person name="Isono Y."/>
            <person name="Nakamura Y."/>
            <person name="Nagahari K."/>
            <person name="Murakami K."/>
            <person name="Yasuda T."/>
            <person name="Iwayanagi T."/>
            <person name="Wagatsuma M."/>
            <person name="Shiratori A."/>
            <person name="Sudo H."/>
            <person name="Hosoiri T."/>
            <person name="Kaku Y."/>
            <person name="Kodaira H."/>
            <person name="Kondo H."/>
            <person name="Sugawara M."/>
            <person name="Takahashi M."/>
            <person name="Kanda K."/>
            <person name="Yokoi T."/>
            <person name="Furuya T."/>
            <person name="Kikkawa E."/>
            <person name="Omura Y."/>
            <person name="Abe K."/>
            <person name="Kamihara K."/>
            <person name="Katsuta N."/>
            <person name="Sato K."/>
            <person name="Tanikawa M."/>
            <person name="Yamazaki M."/>
            <person name="Ninomiya K."/>
            <person name="Ishibashi T."/>
            <person name="Yamashita H."/>
            <person name="Murakawa K."/>
            <person name="Fujimori K."/>
            <person name="Tanai H."/>
            <person name="Kimata M."/>
            <person name="Watanabe M."/>
            <person name="Hiraoka S."/>
            <person name="Chiba Y."/>
            <person name="Ishida S."/>
            <person name="Ono Y."/>
            <person name="Takiguchi S."/>
            <person name="Watanabe S."/>
            <person name="Yosida M."/>
            <person name="Hotuta T."/>
            <person name="Kusano J."/>
            <person name="Kanehori K."/>
            <person name="Takahashi-Fujii A."/>
            <person name="Hara H."/>
            <person name="Tanase T.-O."/>
            <person name="Nomura Y."/>
            <person name="Togiya S."/>
            <person name="Komai F."/>
            <person name="Hara R."/>
            <person name="Takeuchi K."/>
            <person name="Arita M."/>
            <person name="Imose N."/>
            <person name="Musashino K."/>
            <person name="Yuuki H."/>
            <person name="Oshima A."/>
            <person name="Sasaki N."/>
            <person name="Aotsuka S."/>
            <person name="Yoshikawa Y."/>
            <person name="Matsunawa H."/>
            <person name="Ichihara T."/>
            <person name="Shiohata N."/>
            <person name="Sano S."/>
            <person name="Moriya S."/>
            <person name="Momiyama H."/>
            <person name="Satoh N."/>
            <person name="Takami S."/>
            <person name="Terashima Y."/>
            <person name="Suzuki O."/>
            <person name="Nakagawa S."/>
            <person name="Senoh A."/>
            <person name="Mizoguchi H."/>
            <person name="Goto Y."/>
            <person name="Shimizu F."/>
            <person name="Wakebe H."/>
            <person name="Hishigaki H."/>
            <person name="Watanabe T."/>
            <person name="Sugiyama A."/>
            <person name="Takemoto M."/>
            <person name="Kawakami B."/>
            <person name="Yamazaki M."/>
            <person name="Watanabe K."/>
            <person name="Kumagai A."/>
            <person name="Itakura S."/>
            <person name="Fukuzumi Y."/>
            <person name="Fujimori Y."/>
            <person name="Komiyama M."/>
            <person name="Tashiro H."/>
            <person name="Tanigami A."/>
            <person name="Fujiwara T."/>
            <person name="Ono T."/>
            <person name="Yamada K."/>
            <person name="Fujii Y."/>
            <person name="Ozaki K."/>
            <person name="Hirao M."/>
            <person name="Ohmori Y."/>
            <person name="Kawabata A."/>
            <person name="Hikiji T."/>
            <person name="Kobatake N."/>
            <person name="Inagaki H."/>
            <person name="Ikema Y."/>
            <person name="Okamoto S."/>
            <person name="Okitani R."/>
            <person name="Kawakami T."/>
            <person name="Noguchi S."/>
            <person name="Itoh T."/>
            <person name="Shigeta K."/>
            <person name="Senba T."/>
            <person name="Matsumura K."/>
            <person name="Nakajima Y."/>
            <person name="Mizuno T."/>
            <person name="Morinaga M."/>
            <person name="Sasaki M."/>
            <person name="Togashi T."/>
            <person name="Oyama M."/>
            <person name="Hata H."/>
            <person name="Watanabe M."/>
            <person name="Komatsu T."/>
            <person name="Mizushima-Sugano J."/>
            <person name="Satoh T."/>
            <person name="Shirai Y."/>
            <person name="Takahashi Y."/>
            <person name="Nakagawa K."/>
            <person name="Okumura K."/>
            <person name="Nagase T."/>
            <person name="Nomura N."/>
            <person name="Kikuchi H."/>
            <person name="Masuho Y."/>
            <person name="Yamashita R."/>
            <person name="Nakai K."/>
            <person name="Yada T."/>
            <person name="Nakamura Y."/>
            <person name="Ohara O."/>
            <person name="Isogai T."/>
            <person name="Sugano S."/>
        </authorList>
    </citation>
    <scope>NUCLEOTIDE SEQUENCE [LARGE SCALE MRNA] (ISOFORM 2)</scope>
    <source>
        <tissue>Testis</tissue>
    </source>
</reference>
<reference key="6">
    <citation type="journal article" date="2003" name="Nature">
        <title>The DNA sequence and analysis of human chromosome 6.</title>
        <authorList>
            <person name="Mungall A.J."/>
            <person name="Palmer S.A."/>
            <person name="Sims S.K."/>
            <person name="Edwards C.A."/>
            <person name="Ashurst J.L."/>
            <person name="Wilming L."/>
            <person name="Jones M.C."/>
            <person name="Horton R."/>
            <person name="Hunt S.E."/>
            <person name="Scott C.E."/>
            <person name="Gilbert J.G.R."/>
            <person name="Clamp M.E."/>
            <person name="Bethel G."/>
            <person name="Milne S."/>
            <person name="Ainscough R."/>
            <person name="Almeida J.P."/>
            <person name="Ambrose K.D."/>
            <person name="Andrews T.D."/>
            <person name="Ashwell R.I.S."/>
            <person name="Babbage A.K."/>
            <person name="Bagguley C.L."/>
            <person name="Bailey J."/>
            <person name="Banerjee R."/>
            <person name="Barker D.J."/>
            <person name="Barlow K.F."/>
            <person name="Bates K."/>
            <person name="Beare D.M."/>
            <person name="Beasley H."/>
            <person name="Beasley O."/>
            <person name="Bird C.P."/>
            <person name="Blakey S.E."/>
            <person name="Bray-Allen S."/>
            <person name="Brook J."/>
            <person name="Brown A.J."/>
            <person name="Brown J.Y."/>
            <person name="Burford D.C."/>
            <person name="Burrill W."/>
            <person name="Burton J."/>
            <person name="Carder C."/>
            <person name="Carter N.P."/>
            <person name="Chapman J.C."/>
            <person name="Clark S.Y."/>
            <person name="Clark G."/>
            <person name="Clee C.M."/>
            <person name="Clegg S."/>
            <person name="Cobley V."/>
            <person name="Collier R.E."/>
            <person name="Collins J.E."/>
            <person name="Colman L.K."/>
            <person name="Corby N.R."/>
            <person name="Coville G.J."/>
            <person name="Culley K.M."/>
            <person name="Dhami P."/>
            <person name="Davies J."/>
            <person name="Dunn M."/>
            <person name="Earthrowl M.E."/>
            <person name="Ellington A.E."/>
            <person name="Evans K.A."/>
            <person name="Faulkner L."/>
            <person name="Francis M.D."/>
            <person name="Frankish A."/>
            <person name="Frankland J."/>
            <person name="French L."/>
            <person name="Garner P."/>
            <person name="Garnett J."/>
            <person name="Ghori M.J."/>
            <person name="Gilby L.M."/>
            <person name="Gillson C.J."/>
            <person name="Glithero R.J."/>
            <person name="Grafham D.V."/>
            <person name="Grant M."/>
            <person name="Gribble S."/>
            <person name="Griffiths C."/>
            <person name="Griffiths M.N.D."/>
            <person name="Hall R."/>
            <person name="Halls K.S."/>
            <person name="Hammond S."/>
            <person name="Harley J.L."/>
            <person name="Hart E.A."/>
            <person name="Heath P.D."/>
            <person name="Heathcott R."/>
            <person name="Holmes S.J."/>
            <person name="Howden P.J."/>
            <person name="Howe K.L."/>
            <person name="Howell G.R."/>
            <person name="Huckle E."/>
            <person name="Humphray S.J."/>
            <person name="Humphries M.D."/>
            <person name="Hunt A.R."/>
            <person name="Johnson C.M."/>
            <person name="Joy A.A."/>
            <person name="Kay M."/>
            <person name="Keenan S.J."/>
            <person name="Kimberley A.M."/>
            <person name="King A."/>
            <person name="Laird G.K."/>
            <person name="Langford C."/>
            <person name="Lawlor S."/>
            <person name="Leongamornlert D.A."/>
            <person name="Leversha M."/>
            <person name="Lloyd C.R."/>
            <person name="Lloyd D.M."/>
            <person name="Loveland J.E."/>
            <person name="Lovell J."/>
            <person name="Martin S."/>
            <person name="Mashreghi-Mohammadi M."/>
            <person name="Maslen G.L."/>
            <person name="Matthews L."/>
            <person name="McCann O.T."/>
            <person name="McLaren S.J."/>
            <person name="McLay K."/>
            <person name="McMurray A."/>
            <person name="Moore M.J.F."/>
            <person name="Mullikin J.C."/>
            <person name="Niblett D."/>
            <person name="Nickerson T."/>
            <person name="Novik K.L."/>
            <person name="Oliver K."/>
            <person name="Overton-Larty E.K."/>
            <person name="Parker A."/>
            <person name="Patel R."/>
            <person name="Pearce A.V."/>
            <person name="Peck A.I."/>
            <person name="Phillimore B.J.C.T."/>
            <person name="Phillips S."/>
            <person name="Plumb R.W."/>
            <person name="Porter K.M."/>
            <person name="Ramsey Y."/>
            <person name="Ranby S.A."/>
            <person name="Rice C.M."/>
            <person name="Ross M.T."/>
            <person name="Searle S.M."/>
            <person name="Sehra H.K."/>
            <person name="Sheridan E."/>
            <person name="Skuce C.D."/>
            <person name="Smith S."/>
            <person name="Smith M."/>
            <person name="Spraggon L."/>
            <person name="Squares S.L."/>
            <person name="Steward C.A."/>
            <person name="Sycamore N."/>
            <person name="Tamlyn-Hall G."/>
            <person name="Tester J."/>
            <person name="Theaker A.J."/>
            <person name="Thomas D.W."/>
            <person name="Thorpe A."/>
            <person name="Tracey A."/>
            <person name="Tromans A."/>
            <person name="Tubby B."/>
            <person name="Wall M."/>
            <person name="Wallis J.M."/>
            <person name="West A.P."/>
            <person name="White S.S."/>
            <person name="Whitehead S.L."/>
            <person name="Whittaker H."/>
            <person name="Wild A."/>
            <person name="Willey D.J."/>
            <person name="Wilmer T.E."/>
            <person name="Wood J.M."/>
            <person name="Wray P.W."/>
            <person name="Wyatt J.C."/>
            <person name="Young L."/>
            <person name="Younger R.M."/>
            <person name="Bentley D.R."/>
            <person name="Coulson A."/>
            <person name="Durbin R.M."/>
            <person name="Hubbard T."/>
            <person name="Sulston J.E."/>
            <person name="Dunham I."/>
            <person name="Rogers J."/>
            <person name="Beck S."/>
        </authorList>
    </citation>
    <scope>NUCLEOTIDE SEQUENCE [LARGE SCALE GENOMIC DNA]</scope>
</reference>
<reference key="7">
    <citation type="submission" date="2005-07" db="EMBL/GenBank/DDBJ databases">
        <authorList>
            <person name="Mural R.J."/>
            <person name="Istrail S."/>
            <person name="Sutton G.G."/>
            <person name="Florea L."/>
            <person name="Halpern A.L."/>
            <person name="Mobarry C.M."/>
            <person name="Lippert R."/>
            <person name="Walenz B."/>
            <person name="Shatkay H."/>
            <person name="Dew I."/>
            <person name="Miller J.R."/>
            <person name="Flanigan M.J."/>
            <person name="Edwards N.J."/>
            <person name="Bolanos R."/>
            <person name="Fasulo D."/>
            <person name="Halldorsson B.V."/>
            <person name="Hannenhalli S."/>
            <person name="Turner R."/>
            <person name="Yooseph S."/>
            <person name="Lu F."/>
            <person name="Nusskern D.R."/>
            <person name="Shue B.C."/>
            <person name="Zheng X.H."/>
            <person name="Zhong F."/>
            <person name="Delcher A.L."/>
            <person name="Huson D.H."/>
            <person name="Kravitz S.A."/>
            <person name="Mouchard L."/>
            <person name="Reinert K."/>
            <person name="Remington K.A."/>
            <person name="Clark A.G."/>
            <person name="Waterman M.S."/>
            <person name="Eichler E.E."/>
            <person name="Adams M.D."/>
            <person name="Hunkapiller M.W."/>
            <person name="Myers E.W."/>
            <person name="Venter J.C."/>
        </authorList>
    </citation>
    <scope>NUCLEOTIDE SEQUENCE [LARGE SCALE GENOMIC DNA]</scope>
</reference>
<reference key="8">
    <citation type="journal article" date="2004" name="Genome Res.">
        <title>The status, quality, and expansion of the NIH full-length cDNA project: the Mammalian Gene Collection (MGC).</title>
        <authorList>
            <consortium name="The MGC Project Team"/>
        </authorList>
    </citation>
    <scope>NUCLEOTIDE SEQUENCE [LARGE SCALE MRNA] (ISOFORM 1)</scope>
    <source>
        <tissue>Muscle</tissue>
    </source>
</reference>
<reference key="9">
    <citation type="submission" date="2008-02" db="UniProtKB">
        <authorList>
            <person name="Bienvenut W.V."/>
            <person name="Dhillon A.S."/>
            <person name="Kolch W."/>
        </authorList>
    </citation>
    <scope>PROTEIN SEQUENCE OF 2-17; 123-147; 451-461; 592-606; 619-633; 935-942; 1120-1129 AND 1252-1262</scope>
    <scope>CLEAVAGE OF INITIATOR METHIONINE</scope>
    <scope>ACETYLATION AT SER-2</scope>
    <scope>IDENTIFICATION BY MASS SPECTROMETRY</scope>
    <source>
        <tissue>Hepatoma</tissue>
    </source>
</reference>
<reference key="10">
    <citation type="journal article" date="1993" name="Gene">
        <title>Cloning, sequencing and expression of a cDNA encoding mammalian valyl-tRNA synthetase.</title>
        <authorList>
            <person name="Vilalta A."/>
            <person name="Donovan D."/>
            <person name="Wood L."/>
            <person name="Vogeli G."/>
            <person name="Yang D.C.H."/>
        </authorList>
    </citation>
    <scope>NUCLEOTIDE SEQUENCE [MRNA] OF 201-1263 (ISOFORM 1)</scope>
    <scope>FUNCTION</scope>
    <scope>CATALYTIC ACTIVITY</scope>
</reference>
<reference key="11">
    <citation type="journal article" date="2009" name="Science">
        <title>Lysine acetylation targets protein complexes and co-regulates major cellular functions.</title>
        <authorList>
            <person name="Choudhary C."/>
            <person name="Kumar C."/>
            <person name="Gnad F."/>
            <person name="Nielsen M.L."/>
            <person name="Rehman M."/>
            <person name="Walther T.C."/>
            <person name="Olsen J.V."/>
            <person name="Mann M."/>
        </authorList>
    </citation>
    <scope>ACETYLATION [LARGE SCALE ANALYSIS] AT LYS-645</scope>
    <scope>IDENTIFICATION BY MASS SPECTROMETRY [LARGE SCALE ANALYSIS]</scope>
</reference>
<reference key="12">
    <citation type="journal article" date="2011" name="BMC Syst. Biol.">
        <title>Initial characterization of the human central proteome.</title>
        <authorList>
            <person name="Burkard T.R."/>
            <person name="Planyavsky M."/>
            <person name="Kaupe I."/>
            <person name="Breitwieser F.P."/>
            <person name="Buerckstuemmer T."/>
            <person name="Bennett K.L."/>
            <person name="Superti-Furga G."/>
            <person name="Colinge J."/>
        </authorList>
    </citation>
    <scope>IDENTIFICATION BY MASS SPECTROMETRY [LARGE SCALE ANALYSIS]</scope>
</reference>
<reference key="13">
    <citation type="journal article" date="2012" name="Mol. Cell. Proteomics">
        <title>Comparative large-scale characterisation of plant vs. mammal proteins reveals similar and idiosyncratic N-alpha acetylation features.</title>
        <authorList>
            <person name="Bienvenut W.V."/>
            <person name="Sumpton D."/>
            <person name="Martinez A."/>
            <person name="Lilla S."/>
            <person name="Espagne C."/>
            <person name="Meinnel T."/>
            <person name="Giglione C."/>
        </authorList>
    </citation>
    <scope>ACETYLATION [LARGE SCALE ANALYSIS] AT SER-2</scope>
    <scope>CLEAVAGE OF INITIATOR METHIONINE [LARGE SCALE ANALYSIS]</scope>
    <scope>IDENTIFICATION BY MASS SPECTROMETRY [LARGE SCALE ANALYSIS]</scope>
</reference>
<reference key="14">
    <citation type="journal article" date="2012" name="Proc. Natl. Acad. Sci. U.S.A.">
        <title>N-terminal acetylome analyses and functional insights of the N-terminal acetyltransferase NatB.</title>
        <authorList>
            <person name="Van Damme P."/>
            <person name="Lasa M."/>
            <person name="Polevoda B."/>
            <person name="Gazquez C."/>
            <person name="Elosegui-Artola A."/>
            <person name="Kim D.S."/>
            <person name="De Juan-Pardo E."/>
            <person name="Demeyer K."/>
            <person name="Hole K."/>
            <person name="Larrea E."/>
            <person name="Timmerman E."/>
            <person name="Prieto J."/>
            <person name="Arnesen T."/>
            <person name="Sherman F."/>
            <person name="Gevaert K."/>
            <person name="Aldabe R."/>
        </authorList>
    </citation>
    <scope>ACETYLATION [LARGE SCALE ANALYSIS] AT SER-2</scope>
    <scope>CLEAVAGE OF INITIATOR METHIONINE [LARGE SCALE ANALYSIS]</scope>
    <scope>IDENTIFICATION BY MASS SPECTROMETRY [LARGE SCALE ANALYSIS]</scope>
</reference>
<reference key="15">
    <citation type="journal article" date="2013" name="J. Proteome Res.">
        <title>Toward a comprehensive characterization of a human cancer cell phosphoproteome.</title>
        <authorList>
            <person name="Zhou H."/>
            <person name="Di Palma S."/>
            <person name="Preisinger C."/>
            <person name="Peng M."/>
            <person name="Polat A.N."/>
            <person name="Heck A.J."/>
            <person name="Mohammed S."/>
        </authorList>
    </citation>
    <scope>PHOSPHORYLATION [LARGE SCALE ANALYSIS] AT SER-437 AND SER-527</scope>
    <scope>IDENTIFICATION BY MASS SPECTROMETRY [LARGE SCALE ANALYSIS]</scope>
    <source>
        <tissue>Erythroleukemia</tissue>
    </source>
</reference>
<reference key="16">
    <citation type="journal article" date="2014" name="J. Proteomics">
        <title>An enzyme assisted RP-RPLC approach for in-depth analysis of human liver phosphoproteome.</title>
        <authorList>
            <person name="Bian Y."/>
            <person name="Song C."/>
            <person name="Cheng K."/>
            <person name="Dong M."/>
            <person name="Wang F."/>
            <person name="Huang J."/>
            <person name="Sun D."/>
            <person name="Wang L."/>
            <person name="Ye M."/>
            <person name="Zou H."/>
        </authorList>
    </citation>
    <scope>IDENTIFICATION BY MASS SPECTROMETRY [LARGE SCALE ANALYSIS]</scope>
    <source>
        <tissue>Liver</tissue>
    </source>
</reference>
<reference key="17">
    <citation type="journal article" date="2015" name="Proteomics">
        <title>N-terminome analysis of the human mitochondrial proteome.</title>
        <authorList>
            <person name="Vaca Jacome A.S."/>
            <person name="Rabilloud T."/>
            <person name="Schaeffer-Reiss C."/>
            <person name="Rompais M."/>
            <person name="Ayoub D."/>
            <person name="Lane L."/>
            <person name="Bairoch A."/>
            <person name="Van Dorsselaer A."/>
            <person name="Carapito C."/>
        </authorList>
    </citation>
    <scope>IDENTIFICATION BY MASS SPECTROMETRY [LARGE SCALE ANALYSIS]</scope>
</reference>
<reference key="18">
    <citation type="journal article" date="2015" name="Neuron">
        <title>Genes that affect brain structure and function identified by rare variant analyses of mendelian neurologic disease.</title>
        <authorList>
            <person name="Karaca E."/>
            <person name="Harel T."/>
            <person name="Pehlivan D."/>
            <person name="Jhangiani S.N."/>
            <person name="Gambin T."/>
            <person name="Coban Akdemir Z."/>
            <person name="Gonzaga-Jauregui C."/>
            <person name="Erdin S."/>
            <person name="Bayram Y."/>
            <person name="Campbell I.M."/>
            <person name="Hunter J.V."/>
            <person name="Atik M.M."/>
            <person name="Van Esch H."/>
            <person name="Yuan B."/>
            <person name="Wiszniewski W."/>
            <person name="Isikay S."/>
            <person name="Yesil G."/>
            <person name="Yuregir O.O."/>
            <person name="Tug Bozdogan S."/>
            <person name="Aslan H."/>
            <person name="Aydin H."/>
            <person name="Tos T."/>
            <person name="Aksoy A."/>
            <person name="De Vivo D.C."/>
            <person name="Jain P."/>
            <person name="Geckinli B.B."/>
            <person name="Sezer O."/>
            <person name="Gul D."/>
            <person name="Durmaz B."/>
            <person name="Cogulu O."/>
            <person name="Ozkinay F."/>
            <person name="Topcu V."/>
            <person name="Candan S."/>
            <person name="Cebi A.H."/>
            <person name="Ikbal M."/>
            <person name="Yilmaz Gulec E."/>
            <person name="Gezdirici A."/>
            <person name="Koparir E."/>
            <person name="Ekici F."/>
            <person name="Coskun S."/>
            <person name="Cicek S."/>
            <person name="Karaer K."/>
            <person name="Koparir A."/>
            <person name="Duz M.B."/>
            <person name="Kirat E."/>
            <person name="Fenercioglu E."/>
            <person name="Ulucan H."/>
            <person name="Seven M."/>
            <person name="Guran T."/>
            <person name="Elcioglu N."/>
            <person name="Yildirim M.S."/>
            <person name="Aktas D."/>
            <person name="Alikasifoglu M."/>
            <person name="Ture M."/>
            <person name="Yakut T."/>
            <person name="Overton J.D."/>
            <person name="Yuksel A."/>
            <person name="Ozen M."/>
            <person name="Muzny D.M."/>
            <person name="Adams D.R."/>
            <person name="Boerwinkle E."/>
            <person name="Chung W.K."/>
            <person name="Gibbs R.A."/>
            <person name="Lupski J.R."/>
        </authorList>
    </citation>
    <scope>INVOLVEMENT IN NDMSCA</scope>
    <scope>VARIANTS NDMSCA PHE-885 AND GLN-1058</scope>
</reference>